<evidence type="ECO:0000250" key="1">
    <source>
        <dbReference type="UniProtKB" id="Q9Y5R5"/>
    </source>
</evidence>
<evidence type="ECO:0000255" key="2"/>
<evidence type="ECO:0000255" key="3">
    <source>
        <dbReference type="PROSITE-ProRule" id="PRU00070"/>
    </source>
</evidence>
<evidence type="ECO:0000256" key="4">
    <source>
        <dbReference type="SAM" id="MobiDB-lite"/>
    </source>
</evidence>
<evidence type="ECO:0000269" key="5">
    <source>
    </source>
</evidence>
<evidence type="ECO:0000269" key="6">
    <source>
    </source>
</evidence>
<evidence type="ECO:0000269" key="7">
    <source>
    </source>
</evidence>
<evidence type="ECO:0000269" key="8">
    <source>
    </source>
</evidence>
<evidence type="ECO:0000269" key="9">
    <source>
    </source>
</evidence>
<evidence type="ECO:0000269" key="10">
    <source>
    </source>
</evidence>
<evidence type="ECO:0000269" key="11">
    <source>
    </source>
</evidence>
<evidence type="ECO:0000303" key="12">
    <source>
    </source>
</evidence>
<evidence type="ECO:0000305" key="13"/>
<evidence type="ECO:0000312" key="14">
    <source>
        <dbReference type="EMBL" id="AAD38425.1"/>
    </source>
</evidence>
<evidence type="ECO:0000312" key="15">
    <source>
        <dbReference type="EMBL" id="AAH27669.1"/>
    </source>
</evidence>
<evidence type="ECO:0000312" key="16">
    <source>
        <dbReference type="EMBL" id="AAN77205.1"/>
    </source>
</evidence>
<evidence type="ECO:0000312" key="17">
    <source>
        <dbReference type="EMBL" id="BAC32130.1"/>
    </source>
</evidence>
<evidence type="ECO:0000312" key="18">
    <source>
        <dbReference type="EMBL" id="BAE24344.1"/>
    </source>
</evidence>
<evidence type="ECO:0000312" key="19">
    <source>
        <dbReference type="EMBL" id="CAB93343.1"/>
    </source>
</evidence>
<evidence type="ECO:0000312" key="20">
    <source>
        <dbReference type="EMBL" id="EDL41636.1"/>
    </source>
</evidence>
<evidence type="ECO:0000312" key="21">
    <source>
        <dbReference type="MGI" id="MGI:1330307"/>
    </source>
</evidence>
<keyword id="KW-0238">DNA-binding</keyword>
<keyword id="KW-0479">Metal-binding</keyword>
<keyword id="KW-0539">Nucleus</keyword>
<keyword id="KW-1185">Reference proteome</keyword>
<keyword id="KW-0804">Transcription</keyword>
<keyword id="KW-0805">Transcription regulation</keyword>
<keyword id="KW-0862">Zinc</keyword>
<name>DMRT2_MOUSE</name>
<dbReference type="EMBL" id="AF539811">
    <property type="protein sequence ID" value="AAN77205.1"/>
    <property type="molecule type" value="mRNA"/>
</dbReference>
<dbReference type="EMBL" id="AK044891">
    <property type="protein sequence ID" value="BAC32130.1"/>
    <property type="molecule type" value="mRNA"/>
</dbReference>
<dbReference type="EMBL" id="AK140337">
    <property type="protein sequence ID" value="BAE24344.1"/>
    <property type="molecule type" value="mRNA"/>
</dbReference>
<dbReference type="EMBL" id="AK140347">
    <property type="protein sequence ID" value="BAE24347.1"/>
    <property type="status" value="ALT_FRAME"/>
    <property type="molecule type" value="mRNA"/>
</dbReference>
<dbReference type="EMBL" id="AC124540">
    <property type="status" value="NOT_ANNOTATED_CDS"/>
    <property type="molecule type" value="Genomic_DNA"/>
</dbReference>
<dbReference type="EMBL" id="AC132140">
    <property type="status" value="NOT_ANNOTATED_CDS"/>
    <property type="molecule type" value="Genomic_DNA"/>
</dbReference>
<dbReference type="EMBL" id="CH466534">
    <property type="protein sequence ID" value="EDL41636.1"/>
    <property type="molecule type" value="Genomic_DNA"/>
</dbReference>
<dbReference type="EMBL" id="AJ276456">
    <property type="protein sequence ID" value="CAB93343.1"/>
    <property type="status" value="ALT_FRAME"/>
    <property type="molecule type" value="Genomic_DNA"/>
</dbReference>
<dbReference type="EMBL" id="AJ276459">
    <property type="protein sequence ID" value="CAB93346.1"/>
    <property type="molecule type" value="Genomic_DNA"/>
</dbReference>
<dbReference type="EMBL" id="AF080623">
    <property type="protein sequence ID" value="AAD38425.1"/>
    <property type="status" value="ALT_SEQ"/>
    <property type="molecule type" value="mRNA"/>
</dbReference>
<dbReference type="EMBL" id="BC027669">
    <property type="protein sequence ID" value="AAH27669.1"/>
    <property type="status" value="ALT_INIT"/>
    <property type="molecule type" value="mRNA"/>
</dbReference>
<dbReference type="CCDS" id="CCDS29719.1"/>
<dbReference type="RefSeq" id="NP_665830.1">
    <property type="nucleotide sequence ID" value="NM_145831.3"/>
</dbReference>
<dbReference type="SMR" id="Q8BG36"/>
<dbReference type="BioGRID" id="230465">
    <property type="interactions" value="25"/>
</dbReference>
<dbReference type="FunCoup" id="Q8BG36">
    <property type="interactions" value="1320"/>
</dbReference>
<dbReference type="STRING" id="10090.ENSMUSP00000059654"/>
<dbReference type="PhosphoSitePlus" id="Q8BG36"/>
<dbReference type="PaxDb" id="10090-ENSMUSP00000059654"/>
<dbReference type="ProteomicsDB" id="279439"/>
<dbReference type="Antibodypedia" id="9092">
    <property type="antibodies" value="73 antibodies from 19 providers"/>
</dbReference>
<dbReference type="DNASU" id="226049"/>
<dbReference type="Ensembl" id="ENSMUST00000053068.7">
    <property type="protein sequence ID" value="ENSMUSP00000059654.6"/>
    <property type="gene ID" value="ENSMUSG00000048138.11"/>
</dbReference>
<dbReference type="GeneID" id="226049"/>
<dbReference type="KEGG" id="mmu:226049"/>
<dbReference type="UCSC" id="uc008hbm.1">
    <property type="organism name" value="mouse"/>
</dbReference>
<dbReference type="AGR" id="MGI:1330307"/>
<dbReference type="CTD" id="10655"/>
<dbReference type="MGI" id="MGI:1330307">
    <property type="gene designation" value="Dmrt2"/>
</dbReference>
<dbReference type="VEuPathDB" id="HostDB:ENSMUSG00000048138"/>
<dbReference type="eggNOG" id="KOG3815">
    <property type="taxonomic scope" value="Eukaryota"/>
</dbReference>
<dbReference type="GeneTree" id="ENSGT00940000156282"/>
<dbReference type="HOGENOM" id="CLU_030932_0_0_1"/>
<dbReference type="InParanoid" id="Q8BG36"/>
<dbReference type="OMA" id="WDLKGTR"/>
<dbReference type="OrthoDB" id="9420343at2759"/>
<dbReference type="PhylomeDB" id="Q8BG36"/>
<dbReference type="TreeFam" id="TF317837"/>
<dbReference type="BioGRID-ORCS" id="226049">
    <property type="hits" value="5 hits in 77 CRISPR screens"/>
</dbReference>
<dbReference type="ChiTaRS" id="Dmrt2">
    <property type="organism name" value="mouse"/>
</dbReference>
<dbReference type="PRO" id="PR:Q8BG36"/>
<dbReference type="Proteomes" id="UP000000589">
    <property type="component" value="Chromosome 19"/>
</dbReference>
<dbReference type="RNAct" id="Q8BG36">
    <property type="molecule type" value="protein"/>
</dbReference>
<dbReference type="Bgee" id="ENSMUSG00000048138">
    <property type="expression patterns" value="Expressed in tail connective tissue and 83 other cell types or tissues"/>
</dbReference>
<dbReference type="GO" id="GO:0005634">
    <property type="term" value="C:nucleus"/>
    <property type="evidence" value="ECO:0000266"/>
    <property type="project" value="MGI"/>
</dbReference>
<dbReference type="GO" id="GO:0001228">
    <property type="term" value="F:DNA-binding transcription activator activity, RNA polymerase II-specific"/>
    <property type="evidence" value="ECO:0000315"/>
    <property type="project" value="NTNU_SB"/>
</dbReference>
<dbReference type="GO" id="GO:0042802">
    <property type="term" value="F:identical protein binding"/>
    <property type="evidence" value="ECO:0000353"/>
    <property type="project" value="MGI"/>
</dbReference>
<dbReference type="GO" id="GO:0046872">
    <property type="term" value="F:metal ion binding"/>
    <property type="evidence" value="ECO:0007669"/>
    <property type="project" value="UniProtKB-KW"/>
</dbReference>
<dbReference type="GO" id="GO:0000977">
    <property type="term" value="F:RNA polymerase II transcription regulatory region sequence-specific DNA binding"/>
    <property type="evidence" value="ECO:0000314"/>
    <property type="project" value="NTNU_SB"/>
</dbReference>
<dbReference type="GO" id="GO:0043565">
    <property type="term" value="F:sequence-specific DNA binding"/>
    <property type="evidence" value="ECO:0000314"/>
    <property type="project" value="MGI"/>
</dbReference>
<dbReference type="GO" id="GO:0048706">
    <property type="term" value="P:embryonic skeletal system development"/>
    <property type="evidence" value="ECO:0000315"/>
    <property type="project" value="MGI"/>
</dbReference>
<dbReference type="GO" id="GO:0061055">
    <property type="term" value="P:myotome development"/>
    <property type="evidence" value="ECO:0000315"/>
    <property type="project" value="MGI"/>
</dbReference>
<dbReference type="GO" id="GO:2000287">
    <property type="term" value="P:positive regulation of myotome development"/>
    <property type="evidence" value="ECO:0000315"/>
    <property type="project" value="MGI"/>
</dbReference>
<dbReference type="GO" id="GO:0045944">
    <property type="term" value="P:positive regulation of transcription by RNA polymerase II"/>
    <property type="evidence" value="ECO:0000315"/>
    <property type="project" value="NTNU_SB"/>
</dbReference>
<dbReference type="GO" id="GO:0014807">
    <property type="term" value="P:regulation of somitogenesis"/>
    <property type="evidence" value="ECO:0000315"/>
    <property type="project" value="MGI"/>
</dbReference>
<dbReference type="FunFam" id="4.10.1040.10:FF:000001">
    <property type="entry name" value="doublesex- and mab-3-related transcription factor 1"/>
    <property type="match status" value="1"/>
</dbReference>
<dbReference type="Gene3D" id="4.10.1040.10">
    <property type="entry name" value="DM DNA-binding domain"/>
    <property type="match status" value="1"/>
</dbReference>
<dbReference type="InterPro" id="IPR001275">
    <property type="entry name" value="DM_DNA-bd"/>
</dbReference>
<dbReference type="InterPro" id="IPR036407">
    <property type="entry name" value="DM_DNA-bd_sf"/>
</dbReference>
<dbReference type="InterPro" id="IPR026607">
    <property type="entry name" value="DMRT"/>
</dbReference>
<dbReference type="PANTHER" id="PTHR12322">
    <property type="entry name" value="DOUBLESEX AND MAB-3 RELATED TRANSCRIPTION FACTOR DMRT"/>
    <property type="match status" value="1"/>
</dbReference>
<dbReference type="PANTHER" id="PTHR12322:SF122">
    <property type="entry name" value="DOUBLESEX- AND MAB-3-RELATED TRANSCRIPTION FACTOR 2"/>
    <property type="match status" value="1"/>
</dbReference>
<dbReference type="Pfam" id="PF00751">
    <property type="entry name" value="DM"/>
    <property type="match status" value="1"/>
</dbReference>
<dbReference type="SMART" id="SM00301">
    <property type="entry name" value="DM"/>
    <property type="match status" value="1"/>
</dbReference>
<dbReference type="SUPFAM" id="SSF82927">
    <property type="entry name" value="Cysteine-rich DNA binding domain, (DM domain)"/>
    <property type="match status" value="1"/>
</dbReference>
<dbReference type="PROSITE" id="PS40000">
    <property type="entry name" value="DM_1"/>
    <property type="match status" value="1"/>
</dbReference>
<dbReference type="PROSITE" id="PS50809">
    <property type="entry name" value="DM_2"/>
    <property type="match status" value="1"/>
</dbReference>
<proteinExistence type="evidence at protein level"/>
<reference evidence="13 16" key="1">
    <citation type="journal article" date="2003" name="Gene Expr. Patterns">
        <title>Sexually dimorphic expression of multiple doublesex-related genes in the embryonic mouse gonad.</title>
        <authorList>
            <person name="Kim S."/>
            <person name="Kettlewell J.R."/>
            <person name="Anderson R.C."/>
            <person name="Bardwell V.J."/>
            <person name="Zarkower D."/>
        </authorList>
    </citation>
    <scope>NUCLEOTIDE SEQUENCE [MRNA]</scope>
    <scope>TISSUE SPECIFICITY</scope>
    <scope>DEVELOPMENTAL STAGE</scope>
    <source>
        <strain evidence="6">CD-1</strain>
        <tissue evidence="16">Embryo</tissue>
    </source>
</reference>
<reference evidence="17" key="2">
    <citation type="journal article" date="2005" name="Science">
        <title>The transcriptional landscape of the mammalian genome.</title>
        <authorList>
            <person name="Carninci P."/>
            <person name="Kasukawa T."/>
            <person name="Katayama S."/>
            <person name="Gough J."/>
            <person name="Frith M.C."/>
            <person name="Maeda N."/>
            <person name="Oyama R."/>
            <person name="Ravasi T."/>
            <person name="Lenhard B."/>
            <person name="Wells C."/>
            <person name="Kodzius R."/>
            <person name="Shimokawa K."/>
            <person name="Bajic V.B."/>
            <person name="Brenner S.E."/>
            <person name="Batalov S."/>
            <person name="Forrest A.R."/>
            <person name="Zavolan M."/>
            <person name="Davis M.J."/>
            <person name="Wilming L.G."/>
            <person name="Aidinis V."/>
            <person name="Allen J.E."/>
            <person name="Ambesi-Impiombato A."/>
            <person name="Apweiler R."/>
            <person name="Aturaliya R.N."/>
            <person name="Bailey T.L."/>
            <person name="Bansal M."/>
            <person name="Baxter L."/>
            <person name="Beisel K.W."/>
            <person name="Bersano T."/>
            <person name="Bono H."/>
            <person name="Chalk A.M."/>
            <person name="Chiu K.P."/>
            <person name="Choudhary V."/>
            <person name="Christoffels A."/>
            <person name="Clutterbuck D.R."/>
            <person name="Crowe M.L."/>
            <person name="Dalla E."/>
            <person name="Dalrymple B.P."/>
            <person name="de Bono B."/>
            <person name="Della Gatta G."/>
            <person name="di Bernardo D."/>
            <person name="Down T."/>
            <person name="Engstrom P."/>
            <person name="Fagiolini M."/>
            <person name="Faulkner G."/>
            <person name="Fletcher C.F."/>
            <person name="Fukushima T."/>
            <person name="Furuno M."/>
            <person name="Futaki S."/>
            <person name="Gariboldi M."/>
            <person name="Georgii-Hemming P."/>
            <person name="Gingeras T.R."/>
            <person name="Gojobori T."/>
            <person name="Green R.E."/>
            <person name="Gustincich S."/>
            <person name="Harbers M."/>
            <person name="Hayashi Y."/>
            <person name="Hensch T.K."/>
            <person name="Hirokawa N."/>
            <person name="Hill D."/>
            <person name="Huminiecki L."/>
            <person name="Iacono M."/>
            <person name="Ikeo K."/>
            <person name="Iwama A."/>
            <person name="Ishikawa T."/>
            <person name="Jakt M."/>
            <person name="Kanapin A."/>
            <person name="Katoh M."/>
            <person name="Kawasawa Y."/>
            <person name="Kelso J."/>
            <person name="Kitamura H."/>
            <person name="Kitano H."/>
            <person name="Kollias G."/>
            <person name="Krishnan S.P."/>
            <person name="Kruger A."/>
            <person name="Kummerfeld S.K."/>
            <person name="Kurochkin I.V."/>
            <person name="Lareau L.F."/>
            <person name="Lazarevic D."/>
            <person name="Lipovich L."/>
            <person name="Liu J."/>
            <person name="Liuni S."/>
            <person name="McWilliam S."/>
            <person name="Madan Babu M."/>
            <person name="Madera M."/>
            <person name="Marchionni L."/>
            <person name="Matsuda H."/>
            <person name="Matsuzawa S."/>
            <person name="Miki H."/>
            <person name="Mignone F."/>
            <person name="Miyake S."/>
            <person name="Morris K."/>
            <person name="Mottagui-Tabar S."/>
            <person name="Mulder N."/>
            <person name="Nakano N."/>
            <person name="Nakauchi H."/>
            <person name="Ng P."/>
            <person name="Nilsson R."/>
            <person name="Nishiguchi S."/>
            <person name="Nishikawa S."/>
            <person name="Nori F."/>
            <person name="Ohara O."/>
            <person name="Okazaki Y."/>
            <person name="Orlando V."/>
            <person name="Pang K.C."/>
            <person name="Pavan W.J."/>
            <person name="Pavesi G."/>
            <person name="Pesole G."/>
            <person name="Petrovsky N."/>
            <person name="Piazza S."/>
            <person name="Reed J."/>
            <person name="Reid J.F."/>
            <person name="Ring B.Z."/>
            <person name="Ringwald M."/>
            <person name="Rost B."/>
            <person name="Ruan Y."/>
            <person name="Salzberg S.L."/>
            <person name="Sandelin A."/>
            <person name="Schneider C."/>
            <person name="Schoenbach C."/>
            <person name="Sekiguchi K."/>
            <person name="Semple C.A."/>
            <person name="Seno S."/>
            <person name="Sessa L."/>
            <person name="Sheng Y."/>
            <person name="Shibata Y."/>
            <person name="Shimada H."/>
            <person name="Shimada K."/>
            <person name="Silva D."/>
            <person name="Sinclair B."/>
            <person name="Sperling S."/>
            <person name="Stupka E."/>
            <person name="Sugiura K."/>
            <person name="Sultana R."/>
            <person name="Takenaka Y."/>
            <person name="Taki K."/>
            <person name="Tammoja K."/>
            <person name="Tan S.L."/>
            <person name="Tang S."/>
            <person name="Taylor M.S."/>
            <person name="Tegner J."/>
            <person name="Teichmann S.A."/>
            <person name="Ueda H.R."/>
            <person name="van Nimwegen E."/>
            <person name="Verardo R."/>
            <person name="Wei C.L."/>
            <person name="Yagi K."/>
            <person name="Yamanishi H."/>
            <person name="Zabarovsky E."/>
            <person name="Zhu S."/>
            <person name="Zimmer A."/>
            <person name="Hide W."/>
            <person name="Bult C."/>
            <person name="Grimmond S.M."/>
            <person name="Teasdale R.D."/>
            <person name="Liu E.T."/>
            <person name="Brusic V."/>
            <person name="Quackenbush J."/>
            <person name="Wahlestedt C."/>
            <person name="Mattick J.S."/>
            <person name="Hume D.A."/>
            <person name="Kai C."/>
            <person name="Sasaki D."/>
            <person name="Tomaru Y."/>
            <person name="Fukuda S."/>
            <person name="Kanamori-Katayama M."/>
            <person name="Suzuki M."/>
            <person name="Aoki J."/>
            <person name="Arakawa T."/>
            <person name="Iida J."/>
            <person name="Imamura K."/>
            <person name="Itoh M."/>
            <person name="Kato T."/>
            <person name="Kawaji H."/>
            <person name="Kawagashira N."/>
            <person name="Kawashima T."/>
            <person name="Kojima M."/>
            <person name="Kondo S."/>
            <person name="Konno H."/>
            <person name="Nakano K."/>
            <person name="Ninomiya N."/>
            <person name="Nishio T."/>
            <person name="Okada M."/>
            <person name="Plessy C."/>
            <person name="Shibata K."/>
            <person name="Shiraki T."/>
            <person name="Suzuki S."/>
            <person name="Tagami M."/>
            <person name="Waki K."/>
            <person name="Watahiki A."/>
            <person name="Okamura-Oho Y."/>
            <person name="Suzuki H."/>
            <person name="Kawai J."/>
            <person name="Hayashizaki Y."/>
        </authorList>
    </citation>
    <scope>NUCLEOTIDE SEQUENCE [LARGE SCALE MRNA]</scope>
    <source>
        <strain evidence="17">C57BL/6J</strain>
        <tissue evidence="18">Adipose tissue</tissue>
        <tissue evidence="17">Embryo</tissue>
    </source>
</reference>
<reference key="3">
    <citation type="journal article" date="2009" name="PLoS Biol.">
        <title>Lineage-specific biology revealed by a finished genome assembly of the mouse.</title>
        <authorList>
            <person name="Church D.M."/>
            <person name="Goodstadt L."/>
            <person name="Hillier L.W."/>
            <person name="Zody M.C."/>
            <person name="Goldstein S."/>
            <person name="She X."/>
            <person name="Bult C.J."/>
            <person name="Agarwala R."/>
            <person name="Cherry J.L."/>
            <person name="DiCuccio M."/>
            <person name="Hlavina W."/>
            <person name="Kapustin Y."/>
            <person name="Meric P."/>
            <person name="Maglott D."/>
            <person name="Birtle Z."/>
            <person name="Marques A.C."/>
            <person name="Graves T."/>
            <person name="Zhou S."/>
            <person name="Teague B."/>
            <person name="Potamousis K."/>
            <person name="Churas C."/>
            <person name="Place M."/>
            <person name="Herschleb J."/>
            <person name="Runnheim R."/>
            <person name="Forrest D."/>
            <person name="Amos-Landgraf J."/>
            <person name="Schwartz D.C."/>
            <person name="Cheng Z."/>
            <person name="Lindblad-Toh K."/>
            <person name="Eichler E.E."/>
            <person name="Ponting C.P."/>
        </authorList>
    </citation>
    <scope>NUCLEOTIDE SEQUENCE [LARGE SCALE GENOMIC DNA]</scope>
    <source>
        <strain>C57BL/6J</strain>
    </source>
</reference>
<reference evidence="20" key="4">
    <citation type="submission" date="2005-07" db="EMBL/GenBank/DDBJ databases">
        <authorList>
            <person name="Mural R.J."/>
            <person name="Adams M.D."/>
            <person name="Myers E.W."/>
            <person name="Smith H.O."/>
            <person name="Venter J.C."/>
        </authorList>
    </citation>
    <scope>NUCLEOTIDE SEQUENCE [LARGE SCALE GENOMIC DNA]</scope>
</reference>
<reference evidence="13 19" key="5">
    <citation type="journal article" date="2000" name="Genomics">
        <title>A new submicroscopic deletion that refines the 9p region for sex reversal.</title>
        <authorList>
            <person name="Calvari V."/>
            <person name="Bertini V."/>
            <person name="De Grandi A."/>
            <person name="Peverali G."/>
            <person name="Zuffardi O."/>
            <person name="Ferguson-Smith M."/>
            <person name="Knudtzon J."/>
            <person name="Camerino G."/>
            <person name="Borsani G."/>
            <person name="Guioli S."/>
        </authorList>
    </citation>
    <scope>NUCLEOTIDE SEQUENCE [GENOMIC DNA] OF 1-176 AND 213-455</scope>
</reference>
<reference evidence="13 14" key="6">
    <citation type="journal article" date="1999" name="Development">
        <title>A Drosophila doublesex-related gene, terra, is involved in somitogenesis in vertebrates.</title>
        <authorList>
            <person name="Meng A."/>
            <person name="Moore B."/>
            <person name="Tang H."/>
            <person name="Yuan B."/>
            <person name="Lin S."/>
        </authorList>
    </citation>
    <scope>NUCLEOTIDE SEQUENCE [MRNA] OF 224-561</scope>
    <scope>FUNCTION</scope>
    <scope>DEVELOPMENTAL STAGE</scope>
</reference>
<reference evidence="13 15" key="7">
    <citation type="journal article" date="2004" name="Genome Res.">
        <title>The status, quality, and expansion of the NIH full-length cDNA project: the Mammalian Gene Collection (MGC).</title>
        <authorList>
            <consortium name="The MGC Project Team"/>
        </authorList>
    </citation>
    <scope>NUCLEOTIDE SEQUENCE [LARGE SCALE MRNA] OF 224-561</scope>
    <source>
        <tissue evidence="15">Mammary gland</tissue>
    </source>
</reference>
<reference evidence="13" key="8">
    <citation type="journal article" date="2006" name="Dev. Biol.">
        <title>Targeted disruption of the DM domain containing transcription factor Dmrt2 reveals an essential role in somite patterning.</title>
        <authorList>
            <person name="Seo K.W."/>
            <person name="Wang Y."/>
            <person name="Kokubo H."/>
            <person name="Kettlewell J.R."/>
            <person name="Zarkower D.A."/>
            <person name="Johnson R.L."/>
        </authorList>
    </citation>
    <scope>FUNCTION</scope>
    <scope>DEVELOPMENTAL STAGE</scope>
    <scope>DISRUPTION PHENOTYPE</scope>
</reference>
<reference evidence="13" key="9">
    <citation type="journal article" date="2007" name="BMC Mol. Biol.">
        <title>Vertebrate DM domain proteins bind similar DNA sequences and can heterodimerize on DNA.</title>
        <authorList>
            <person name="Murphy M.W."/>
            <person name="Zarkower D."/>
            <person name="Bardwell V.J."/>
        </authorList>
    </citation>
    <scope>FUNCTION</scope>
    <scope>DNA-BINDING</scope>
    <scope>SUBUNIT</scope>
    <scope>SUBCELLULAR LOCATION</scope>
</reference>
<reference evidence="13" key="10">
    <citation type="journal article" date="2007" name="Comp. Med.">
        <title>Dmrt2 and Pax3 double-knockout mice show severe defects in embryonic myogenesis.</title>
        <authorList>
            <person name="Seo K.W."/>
        </authorList>
    </citation>
    <scope>DISRUPTION PHENOTYPE</scope>
</reference>
<reference evidence="13" key="11">
    <citation type="journal article" date="2010" name="PLoS Genet.">
        <title>A Pax3/Dmrt2/Myf5 regulatory cascade functions at the onset of myogenesis.</title>
        <authorList>
            <person name="Sato T."/>
            <person name="Rocancourt D."/>
            <person name="Marques L."/>
            <person name="Thorsteinsdottir S."/>
            <person name="Buckingham M."/>
        </authorList>
    </citation>
    <scope>FUNCTION</scope>
    <scope>DNA-BINDING</scope>
    <scope>TISSUE SPECIFICITY</scope>
    <scope>DEVELOPMENTAL STAGE</scope>
    <scope>INDUCTION BY PAX3</scope>
    <scope>DISRUPTION PHENOTYPE</scope>
</reference>
<reference evidence="13" key="12">
    <citation type="journal article" date="2010" name="PLoS ONE">
        <title>Left-right function of dmrt2 genes is not conserved between zebrafish and mouse.</title>
        <authorList>
            <person name="Lourenco R."/>
            <person name="Lopes S.S."/>
            <person name="Saude L."/>
        </authorList>
    </citation>
    <scope>FUNCTION</scope>
    <scope>DISRUPTION PHENOTYPE</scope>
</reference>
<gene>
    <name evidence="16 21" type="primary">Dmrt2</name>
</gene>
<protein>
    <recommendedName>
        <fullName evidence="1 16">Doublesex- and mab-3-related transcription factor 2</fullName>
    </recommendedName>
    <alternativeName>
        <fullName evidence="1">Doublesex-like 2 protein</fullName>
    </alternativeName>
    <alternativeName>
        <fullName evidence="12 14">Terra</fullName>
    </alternativeName>
</protein>
<organism>
    <name type="scientific">Mus musculus</name>
    <name type="common">Mouse</name>
    <dbReference type="NCBI Taxonomy" id="10090"/>
    <lineage>
        <taxon>Eukaryota</taxon>
        <taxon>Metazoa</taxon>
        <taxon>Chordata</taxon>
        <taxon>Craniata</taxon>
        <taxon>Vertebrata</taxon>
        <taxon>Euteleostomi</taxon>
        <taxon>Mammalia</taxon>
        <taxon>Eutheria</taxon>
        <taxon>Euarchontoglires</taxon>
        <taxon>Glires</taxon>
        <taxon>Rodentia</taxon>
        <taxon>Myomorpha</taxon>
        <taxon>Muroidea</taxon>
        <taxon>Muridae</taxon>
        <taxon>Murinae</taxon>
        <taxon>Mus</taxon>
        <taxon>Mus</taxon>
    </lineage>
</organism>
<feature type="chain" id="PRO_0000423010" description="Doublesex- and mab-3-related transcription factor 2">
    <location>
        <begin position="1"/>
        <end position="561"/>
    </location>
</feature>
<feature type="DNA-binding region" description="DM" evidence="3">
    <location>
        <begin position="123"/>
        <end position="170"/>
    </location>
</feature>
<feature type="region of interest" description="Disordered" evidence="4">
    <location>
        <begin position="1"/>
        <end position="119"/>
    </location>
</feature>
<feature type="compositionally biased region" description="Acidic residues" evidence="4">
    <location>
        <begin position="13"/>
        <end position="26"/>
    </location>
</feature>
<feature type="compositionally biased region" description="Acidic residues" evidence="4">
    <location>
        <begin position="45"/>
        <end position="67"/>
    </location>
</feature>
<feature type="compositionally biased region" description="Low complexity" evidence="4">
    <location>
        <begin position="68"/>
        <end position="85"/>
    </location>
</feature>
<feature type="compositionally biased region" description="Low complexity" evidence="4">
    <location>
        <begin position="92"/>
        <end position="106"/>
    </location>
</feature>
<feature type="sequence conflict" description="In Ref. 2; BAE24344/BAE24347." evidence="13" ref="2">
    <original>S</original>
    <variation>I</variation>
    <location>
        <position position="19"/>
    </location>
</feature>
<feature type="sequence conflict" description="In Ref. 5; CAB93343." evidence="13" ref="5">
    <original>P</original>
    <variation>A</variation>
    <location>
        <position position="90"/>
    </location>
</feature>
<feature type="sequence conflict" description="In Ref. 5; CAB93343." evidence="13" ref="5">
    <original>D</original>
    <variation>V</variation>
    <location>
        <position position="176"/>
    </location>
</feature>
<feature type="sequence conflict" description="In Ref. 6; AAD38425." evidence="13" ref="6">
    <original>M</original>
    <variation>K</variation>
    <location>
        <position position="274"/>
    </location>
</feature>
<feature type="sequence conflict" description="In Ref. 2; BAE24344/BAE24347." evidence="13" ref="2">
    <original>R</original>
    <variation>Q</variation>
    <location>
        <position position="434"/>
    </location>
</feature>
<feature type="sequence conflict" description="In Ref. 2; BAE24344/BAE24347." evidence="13" ref="2">
    <original>D</original>
    <variation>E</variation>
    <location>
        <position position="524"/>
    </location>
</feature>
<feature type="sequence conflict" description="In Ref. 2; BAE24347." evidence="13" ref="2">
    <original>S</original>
    <variation>L</variation>
    <location>
        <position position="547"/>
    </location>
</feature>
<accession>Q8BG36</accession>
<accession>Q3USI4</accession>
<accession>Q3USI7</accession>
<accession>Q8K185</accession>
<accession>Q9JJU0</accession>
<accession>Q9JJU3</accession>
<accession>Q9WVM0</accession>
<comment type="function">
    <text evidence="5 7 8 10 11">Transcriptional activator that directly regulates early activation of the myogenic determination gene MYF5 by binding in a sequence-specific manner to the early epaxial enhancer element of it. Involved in somitogenesis during embryogenesis and somite development and differentiation into sclerotome and dermomyotome. Required for the initiation and/or maintenance of proper organization of the sclerotome, dermomyotome and myotome. Is not required for sex determination and/or differentiation in embryonic development. Also not involved in symmetric somite formation and hence does not regulate the laterality pathway that controls left-right asymmetric organ positioning.</text>
</comment>
<comment type="subunit">
    <text evidence="8">Homodimer.</text>
</comment>
<comment type="subcellular location">
    <subcellularLocation>
        <location evidence="3 8">Nucleus</location>
    </subcellularLocation>
</comment>
<comment type="tissue specificity">
    <text evidence="6 10">Expressed in testis.</text>
</comment>
<comment type="developmental stage">
    <text evidence="5 6 7 10">Expressed in presomitic mesoderm and developing somites at 8.5 dpc, accumulating in the epaxial domain at 9.5 dpc in the immature caudal somites. At 10.5 dpc expressed in the dermomyotome of somites. By 11.5 dpc, only detectable in caudal somites. In mature somites, expression is confined to the dermomyotome of the somite where Pax3 is also expressed and in the epaxial domain of the most immature caudal somites. At this stage, the most mature anterior somites are beginning to lose the expression at the epaxial and hypaxial extremities of the dermomyotome. At 14.5 dpc expressed in testis, heart and brain. Expression is also detected in proximal forelimb buds and branchial arches of the developing embryo.</text>
</comment>
<comment type="induction">
    <text evidence="10">Transcriptionally up-regulated by PAX3 within the dermomyotome.</text>
</comment>
<comment type="disruption phenotype">
    <text evidence="7 9 10 11">Mice heterozygous for Dmrt2 mutation exhibit no visible phenotype. Homozygotes are perinatally lethal due to signs of respiratory distress. They have rib, sternal, vertebral and skull base malformations. Expression of myogenic growth factors, such as Pax3 and Myog, the growth factor Pdgfa, cadherin Cdh2, and the filament protein Des is abnormal. Mutants lack most or all of the epithelial organization seen in wild-type somites, sclerotome and dermomyotome. Mutants have disrupted production of matrix components including laminin-1 in the dermomyotome. Arrangement of the myogenic cells of the inter-limb somites is abnormal. Myf5 activation in the epaxial domain is retarded thus having consequences in the myogenesis by delaying expression of Myog. Mutants do not have left-right defects regarding internal organs positioning. Dmrt2 and Pax3 double null mutant embryos exhibit suspended development and Myog expression is markedly decreased and its expression pattern dramatically distorted.</text>
</comment>
<comment type="similarity">
    <text evidence="2">Belongs to the DMRT family.</text>
</comment>
<comment type="sequence caution" evidence="13">
    <conflict type="miscellaneous discrepancy">
        <sequence resource="EMBL-CDS" id="AAD38425"/>
    </conflict>
</comment>
<comment type="sequence caution" evidence="13">
    <conflict type="erroneous initiation">
        <sequence resource="EMBL-CDS" id="AAH27669"/>
    </conflict>
    <text>Truncated N-terminus.</text>
</comment>
<comment type="sequence caution" evidence="13">
    <conflict type="frameshift">
        <sequence resource="EMBL-CDS" id="BAE24347"/>
    </conflict>
</comment>
<comment type="sequence caution" evidence="13">
    <conflict type="frameshift">
        <sequence resource="EMBL-CDS" id="CAB93343"/>
    </conflict>
</comment>
<sequence length="561" mass="61641">MTEGQAVPGVGDWEIDVESLDLEEDSCGTPLRATPPQEPSPAAADGEEDEDEEEEDEDVEDEGDGEEPGVSSEVPGRPEQPGGLAPRPPPAAQALPAAAAAPERGATAGGGAEPRKLSRTPKCARCRNHGVVSCLKGHKRFCRWRDCQCANCLLVVERQRVMAAQVALRRQQATEDKKGLSGKQNNFDRKAVYQRQVRAPSLLAKSILEGYRPMTAETYLGGTLPLPPPVSDRMRKRRAFADKELENIMLEREYKEREMLETSQAAALFLPNRMVPGPEYSSYKGTYSPTAGELPSKDFCNFLPTCLDLTMQYSGSGNMELISSNVSVATTYRQYPLSSRFLVWPKCGPISDTLLYQQYLLNATTSVQALKPGTGWDLKGTRVQDGLSAEQDMMPPKLEGSLVLPHLPEVPASRTDLQVHQVVPERSAFSPPGRNFSPIVDMDCLAAQGHVLTKLSKENTRPSLPLKTNPFHSVFQQTLSDKSGPELNAPFVKEAFEETPKKHRECLVKESQKYTFTIDRCAKDLFVAKQVGTKLSANEPLSFSVESILKRPSSAVTHVSQ</sequence>